<reference key="1">
    <citation type="journal article" date="2009" name="J. Bacteriol.">
        <title>Genome sequences of three Agrobacterium biovars help elucidate the evolution of multichromosome genomes in bacteria.</title>
        <authorList>
            <person name="Slater S.C."/>
            <person name="Goldman B.S."/>
            <person name="Goodner B."/>
            <person name="Setubal J.C."/>
            <person name="Farrand S.K."/>
            <person name="Nester E.W."/>
            <person name="Burr T.J."/>
            <person name="Banta L."/>
            <person name="Dickerman A.W."/>
            <person name="Paulsen I."/>
            <person name="Otten L."/>
            <person name="Suen G."/>
            <person name="Welch R."/>
            <person name="Almeida N.F."/>
            <person name="Arnold F."/>
            <person name="Burton O.T."/>
            <person name="Du Z."/>
            <person name="Ewing A."/>
            <person name="Godsy E."/>
            <person name="Heisel S."/>
            <person name="Houmiel K.L."/>
            <person name="Jhaveri J."/>
            <person name="Lu J."/>
            <person name="Miller N.M."/>
            <person name="Norton S."/>
            <person name="Chen Q."/>
            <person name="Phoolcharoen W."/>
            <person name="Ohlin V."/>
            <person name="Ondrusek D."/>
            <person name="Pride N."/>
            <person name="Stricklin S.L."/>
            <person name="Sun J."/>
            <person name="Wheeler C."/>
            <person name="Wilson L."/>
            <person name="Zhu H."/>
            <person name="Wood D.W."/>
        </authorList>
    </citation>
    <scope>NUCLEOTIDE SEQUENCE [LARGE SCALE GENOMIC DNA]</scope>
    <source>
        <strain>ATCC BAA-846 / DSM 112012 / S4</strain>
    </source>
</reference>
<feature type="chain" id="PRO_1000185288" description="Ribosomal RNA large subunit methyltransferase E">
    <location>
        <begin position="1"/>
        <end position="261"/>
    </location>
</feature>
<feature type="region of interest" description="Disordered" evidence="2">
    <location>
        <begin position="233"/>
        <end position="261"/>
    </location>
</feature>
<feature type="compositionally biased region" description="Basic and acidic residues" evidence="2">
    <location>
        <begin position="245"/>
        <end position="254"/>
    </location>
</feature>
<feature type="active site" description="Proton acceptor" evidence="1">
    <location>
        <position position="184"/>
    </location>
</feature>
<feature type="binding site" evidence="1">
    <location>
        <position position="81"/>
    </location>
    <ligand>
        <name>S-adenosyl-L-methionine</name>
        <dbReference type="ChEBI" id="CHEBI:59789"/>
    </ligand>
</feature>
<feature type="binding site" evidence="1">
    <location>
        <position position="83"/>
    </location>
    <ligand>
        <name>S-adenosyl-L-methionine</name>
        <dbReference type="ChEBI" id="CHEBI:59789"/>
    </ligand>
</feature>
<feature type="binding site" evidence="1">
    <location>
        <position position="104"/>
    </location>
    <ligand>
        <name>S-adenosyl-L-methionine</name>
        <dbReference type="ChEBI" id="CHEBI:59789"/>
    </ligand>
</feature>
<feature type="binding site" evidence="1">
    <location>
        <position position="120"/>
    </location>
    <ligand>
        <name>S-adenosyl-L-methionine</name>
        <dbReference type="ChEBI" id="CHEBI:59789"/>
    </ligand>
</feature>
<feature type="binding site" evidence="1">
    <location>
        <position position="144"/>
    </location>
    <ligand>
        <name>S-adenosyl-L-methionine</name>
        <dbReference type="ChEBI" id="CHEBI:59789"/>
    </ligand>
</feature>
<protein>
    <recommendedName>
        <fullName evidence="1">Ribosomal RNA large subunit methyltransferase E</fullName>
        <ecNumber evidence="1">2.1.1.166</ecNumber>
    </recommendedName>
    <alternativeName>
        <fullName evidence="1">23S rRNA Um2552 methyltransferase</fullName>
    </alternativeName>
    <alternativeName>
        <fullName evidence="1">rRNA (uridine-2'-O-)-methyltransferase</fullName>
    </alternativeName>
</protein>
<proteinExistence type="inferred from homology"/>
<organism>
    <name type="scientific">Allorhizobium ampelinum (strain ATCC BAA-846 / DSM 112012 / S4)</name>
    <name type="common">Agrobacterium vitis (strain S4)</name>
    <dbReference type="NCBI Taxonomy" id="311402"/>
    <lineage>
        <taxon>Bacteria</taxon>
        <taxon>Pseudomonadati</taxon>
        <taxon>Pseudomonadota</taxon>
        <taxon>Alphaproteobacteria</taxon>
        <taxon>Hyphomicrobiales</taxon>
        <taxon>Rhizobiaceae</taxon>
        <taxon>Rhizobium/Agrobacterium group</taxon>
        <taxon>Allorhizobium</taxon>
        <taxon>Allorhizobium ampelinum</taxon>
    </lineage>
</organism>
<dbReference type="EC" id="2.1.1.166" evidence="1"/>
<dbReference type="EMBL" id="CP000633">
    <property type="protein sequence ID" value="ACM35625.1"/>
    <property type="molecule type" value="Genomic_DNA"/>
</dbReference>
<dbReference type="RefSeq" id="WP_015915050.1">
    <property type="nucleotide sequence ID" value="NC_011989.1"/>
</dbReference>
<dbReference type="SMR" id="B9JSD2"/>
<dbReference type="STRING" id="311402.Avi_0889"/>
<dbReference type="KEGG" id="avi:Avi_0889"/>
<dbReference type="eggNOG" id="COG0293">
    <property type="taxonomic scope" value="Bacteria"/>
</dbReference>
<dbReference type="HOGENOM" id="CLU_009422_4_0_5"/>
<dbReference type="Proteomes" id="UP000001596">
    <property type="component" value="Chromosome 1"/>
</dbReference>
<dbReference type="GO" id="GO:0005737">
    <property type="term" value="C:cytoplasm"/>
    <property type="evidence" value="ECO:0007669"/>
    <property type="project" value="UniProtKB-SubCell"/>
</dbReference>
<dbReference type="GO" id="GO:0008650">
    <property type="term" value="F:rRNA (uridine-2'-O-)-methyltransferase activity"/>
    <property type="evidence" value="ECO:0007669"/>
    <property type="project" value="UniProtKB-UniRule"/>
</dbReference>
<dbReference type="Gene3D" id="3.40.50.150">
    <property type="entry name" value="Vaccinia Virus protein VP39"/>
    <property type="match status" value="1"/>
</dbReference>
<dbReference type="HAMAP" id="MF_01547">
    <property type="entry name" value="RNA_methyltr_E"/>
    <property type="match status" value="1"/>
</dbReference>
<dbReference type="InterPro" id="IPR050082">
    <property type="entry name" value="RNA_methyltr_RlmE"/>
</dbReference>
<dbReference type="InterPro" id="IPR002877">
    <property type="entry name" value="RNA_MeTrfase_FtsJ_dom"/>
</dbReference>
<dbReference type="InterPro" id="IPR015507">
    <property type="entry name" value="rRNA-MeTfrase_E"/>
</dbReference>
<dbReference type="InterPro" id="IPR029063">
    <property type="entry name" value="SAM-dependent_MTases_sf"/>
</dbReference>
<dbReference type="PANTHER" id="PTHR10920">
    <property type="entry name" value="RIBOSOMAL RNA METHYLTRANSFERASE"/>
    <property type="match status" value="1"/>
</dbReference>
<dbReference type="PANTHER" id="PTHR10920:SF18">
    <property type="entry name" value="RRNA METHYLTRANSFERASE 2, MITOCHONDRIAL"/>
    <property type="match status" value="1"/>
</dbReference>
<dbReference type="Pfam" id="PF01728">
    <property type="entry name" value="FtsJ"/>
    <property type="match status" value="1"/>
</dbReference>
<dbReference type="SUPFAM" id="SSF53335">
    <property type="entry name" value="S-adenosyl-L-methionine-dependent methyltransferases"/>
    <property type="match status" value="1"/>
</dbReference>
<keyword id="KW-0963">Cytoplasm</keyword>
<keyword id="KW-0489">Methyltransferase</keyword>
<keyword id="KW-1185">Reference proteome</keyword>
<keyword id="KW-0698">rRNA processing</keyword>
<keyword id="KW-0949">S-adenosyl-L-methionine</keyword>
<keyword id="KW-0808">Transferase</keyword>
<sequence>MTKPPIGGNRTGRKLGQKVKKGKLKASSRRWLERHINDPYVQRAKLEGYRARAAFKLLEIDEKHNILKGARRIIDLGAAPGSWSQIAANVTGSTDSDIRVAAIDFLEMTQLPGVKILQLDFLDPQAPALLMEAVGGVPDVVISDMAAPTTGHQKTDHIRTMHLCEVAAYFAVEVLAEGGHFLAKTFQGGTEKDLLNMLKQNFKQVIHIKPASSRQESVEMFLLAKGFKGRRSGNALGHEVEDDGPMPHDPREDATADEDQD</sequence>
<name>RLME_ALLAM</name>
<comment type="function">
    <text evidence="1">Specifically methylates the uridine in position 2552 of 23S rRNA at the 2'-O position of the ribose in the fully assembled 50S ribosomal subunit.</text>
</comment>
<comment type="catalytic activity">
    <reaction evidence="1">
        <text>uridine(2552) in 23S rRNA + S-adenosyl-L-methionine = 2'-O-methyluridine(2552) in 23S rRNA + S-adenosyl-L-homocysteine + H(+)</text>
        <dbReference type="Rhea" id="RHEA:42720"/>
        <dbReference type="Rhea" id="RHEA-COMP:10202"/>
        <dbReference type="Rhea" id="RHEA-COMP:10203"/>
        <dbReference type="ChEBI" id="CHEBI:15378"/>
        <dbReference type="ChEBI" id="CHEBI:57856"/>
        <dbReference type="ChEBI" id="CHEBI:59789"/>
        <dbReference type="ChEBI" id="CHEBI:65315"/>
        <dbReference type="ChEBI" id="CHEBI:74478"/>
        <dbReference type="EC" id="2.1.1.166"/>
    </reaction>
</comment>
<comment type="subcellular location">
    <subcellularLocation>
        <location evidence="1">Cytoplasm</location>
    </subcellularLocation>
</comment>
<comment type="similarity">
    <text evidence="1">Belongs to the class I-like SAM-binding methyltransferase superfamily. RNA methyltransferase RlmE family.</text>
</comment>
<accession>B9JSD2</accession>
<evidence type="ECO:0000255" key="1">
    <source>
        <dbReference type="HAMAP-Rule" id="MF_01547"/>
    </source>
</evidence>
<evidence type="ECO:0000256" key="2">
    <source>
        <dbReference type="SAM" id="MobiDB-lite"/>
    </source>
</evidence>
<gene>
    <name evidence="1" type="primary">rlmE</name>
    <name evidence="1" type="synonym">ftsJ</name>
    <name evidence="1" type="synonym">rrmJ</name>
    <name type="ordered locus">Avi_0889</name>
</gene>